<reference key="1">
    <citation type="journal article" date="2005" name="Science">
        <title>The transcriptional landscape of the mammalian genome.</title>
        <authorList>
            <person name="Carninci P."/>
            <person name="Kasukawa T."/>
            <person name="Katayama S."/>
            <person name="Gough J."/>
            <person name="Frith M.C."/>
            <person name="Maeda N."/>
            <person name="Oyama R."/>
            <person name="Ravasi T."/>
            <person name="Lenhard B."/>
            <person name="Wells C."/>
            <person name="Kodzius R."/>
            <person name="Shimokawa K."/>
            <person name="Bajic V.B."/>
            <person name="Brenner S.E."/>
            <person name="Batalov S."/>
            <person name="Forrest A.R."/>
            <person name="Zavolan M."/>
            <person name="Davis M.J."/>
            <person name="Wilming L.G."/>
            <person name="Aidinis V."/>
            <person name="Allen J.E."/>
            <person name="Ambesi-Impiombato A."/>
            <person name="Apweiler R."/>
            <person name="Aturaliya R.N."/>
            <person name="Bailey T.L."/>
            <person name="Bansal M."/>
            <person name="Baxter L."/>
            <person name="Beisel K.W."/>
            <person name="Bersano T."/>
            <person name="Bono H."/>
            <person name="Chalk A.M."/>
            <person name="Chiu K.P."/>
            <person name="Choudhary V."/>
            <person name="Christoffels A."/>
            <person name="Clutterbuck D.R."/>
            <person name="Crowe M.L."/>
            <person name="Dalla E."/>
            <person name="Dalrymple B.P."/>
            <person name="de Bono B."/>
            <person name="Della Gatta G."/>
            <person name="di Bernardo D."/>
            <person name="Down T."/>
            <person name="Engstrom P."/>
            <person name="Fagiolini M."/>
            <person name="Faulkner G."/>
            <person name="Fletcher C.F."/>
            <person name="Fukushima T."/>
            <person name="Furuno M."/>
            <person name="Futaki S."/>
            <person name="Gariboldi M."/>
            <person name="Georgii-Hemming P."/>
            <person name="Gingeras T.R."/>
            <person name="Gojobori T."/>
            <person name="Green R.E."/>
            <person name="Gustincich S."/>
            <person name="Harbers M."/>
            <person name="Hayashi Y."/>
            <person name="Hensch T.K."/>
            <person name="Hirokawa N."/>
            <person name="Hill D."/>
            <person name="Huminiecki L."/>
            <person name="Iacono M."/>
            <person name="Ikeo K."/>
            <person name="Iwama A."/>
            <person name="Ishikawa T."/>
            <person name="Jakt M."/>
            <person name="Kanapin A."/>
            <person name="Katoh M."/>
            <person name="Kawasawa Y."/>
            <person name="Kelso J."/>
            <person name="Kitamura H."/>
            <person name="Kitano H."/>
            <person name="Kollias G."/>
            <person name="Krishnan S.P."/>
            <person name="Kruger A."/>
            <person name="Kummerfeld S.K."/>
            <person name="Kurochkin I.V."/>
            <person name="Lareau L.F."/>
            <person name="Lazarevic D."/>
            <person name="Lipovich L."/>
            <person name="Liu J."/>
            <person name="Liuni S."/>
            <person name="McWilliam S."/>
            <person name="Madan Babu M."/>
            <person name="Madera M."/>
            <person name="Marchionni L."/>
            <person name="Matsuda H."/>
            <person name="Matsuzawa S."/>
            <person name="Miki H."/>
            <person name="Mignone F."/>
            <person name="Miyake S."/>
            <person name="Morris K."/>
            <person name="Mottagui-Tabar S."/>
            <person name="Mulder N."/>
            <person name="Nakano N."/>
            <person name="Nakauchi H."/>
            <person name="Ng P."/>
            <person name="Nilsson R."/>
            <person name="Nishiguchi S."/>
            <person name="Nishikawa S."/>
            <person name="Nori F."/>
            <person name="Ohara O."/>
            <person name="Okazaki Y."/>
            <person name="Orlando V."/>
            <person name="Pang K.C."/>
            <person name="Pavan W.J."/>
            <person name="Pavesi G."/>
            <person name="Pesole G."/>
            <person name="Petrovsky N."/>
            <person name="Piazza S."/>
            <person name="Reed J."/>
            <person name="Reid J.F."/>
            <person name="Ring B.Z."/>
            <person name="Ringwald M."/>
            <person name="Rost B."/>
            <person name="Ruan Y."/>
            <person name="Salzberg S.L."/>
            <person name="Sandelin A."/>
            <person name="Schneider C."/>
            <person name="Schoenbach C."/>
            <person name="Sekiguchi K."/>
            <person name="Semple C.A."/>
            <person name="Seno S."/>
            <person name="Sessa L."/>
            <person name="Sheng Y."/>
            <person name="Shibata Y."/>
            <person name="Shimada H."/>
            <person name="Shimada K."/>
            <person name="Silva D."/>
            <person name="Sinclair B."/>
            <person name="Sperling S."/>
            <person name="Stupka E."/>
            <person name="Sugiura K."/>
            <person name="Sultana R."/>
            <person name="Takenaka Y."/>
            <person name="Taki K."/>
            <person name="Tammoja K."/>
            <person name="Tan S.L."/>
            <person name="Tang S."/>
            <person name="Taylor M.S."/>
            <person name="Tegner J."/>
            <person name="Teichmann S.A."/>
            <person name="Ueda H.R."/>
            <person name="van Nimwegen E."/>
            <person name="Verardo R."/>
            <person name="Wei C.L."/>
            <person name="Yagi K."/>
            <person name="Yamanishi H."/>
            <person name="Zabarovsky E."/>
            <person name="Zhu S."/>
            <person name="Zimmer A."/>
            <person name="Hide W."/>
            <person name="Bult C."/>
            <person name="Grimmond S.M."/>
            <person name="Teasdale R.D."/>
            <person name="Liu E.T."/>
            <person name="Brusic V."/>
            <person name="Quackenbush J."/>
            <person name="Wahlestedt C."/>
            <person name="Mattick J.S."/>
            <person name="Hume D.A."/>
            <person name="Kai C."/>
            <person name="Sasaki D."/>
            <person name="Tomaru Y."/>
            <person name="Fukuda S."/>
            <person name="Kanamori-Katayama M."/>
            <person name="Suzuki M."/>
            <person name="Aoki J."/>
            <person name="Arakawa T."/>
            <person name="Iida J."/>
            <person name="Imamura K."/>
            <person name="Itoh M."/>
            <person name="Kato T."/>
            <person name="Kawaji H."/>
            <person name="Kawagashira N."/>
            <person name="Kawashima T."/>
            <person name="Kojima M."/>
            <person name="Kondo S."/>
            <person name="Konno H."/>
            <person name="Nakano K."/>
            <person name="Ninomiya N."/>
            <person name="Nishio T."/>
            <person name="Okada M."/>
            <person name="Plessy C."/>
            <person name="Shibata K."/>
            <person name="Shiraki T."/>
            <person name="Suzuki S."/>
            <person name="Tagami M."/>
            <person name="Waki K."/>
            <person name="Watahiki A."/>
            <person name="Okamura-Oho Y."/>
            <person name="Suzuki H."/>
            <person name="Kawai J."/>
            <person name="Hayashizaki Y."/>
        </authorList>
    </citation>
    <scope>NUCLEOTIDE SEQUENCE [LARGE SCALE MRNA] (ISOFORMS 1 AND 2)</scope>
    <source>
        <strain>C57BL/6J</strain>
        <tissue>Placenta</tissue>
    </source>
</reference>
<reference key="2">
    <citation type="submission" date="2005-07" db="EMBL/GenBank/DDBJ databases">
        <authorList>
            <person name="Mural R.J."/>
            <person name="Adams M.D."/>
            <person name="Myers E.W."/>
            <person name="Smith H.O."/>
            <person name="Venter J.C."/>
        </authorList>
    </citation>
    <scope>NUCLEOTIDE SEQUENCE [LARGE SCALE GENOMIC DNA]</scope>
</reference>
<reference key="3">
    <citation type="journal article" date="2004" name="Genome Res.">
        <title>The status, quality, and expansion of the NIH full-length cDNA project: the Mammalian Gene Collection (MGC).</title>
        <authorList>
            <consortium name="The MGC Project Team"/>
        </authorList>
    </citation>
    <scope>NUCLEOTIDE SEQUENCE [LARGE SCALE MRNA] (ISOFORM 2)</scope>
    <source>
        <strain>C57BL/6J</strain>
        <tissue>Brain</tissue>
    </source>
</reference>
<reference key="4">
    <citation type="journal article" date="2007" name="Neuron">
        <title>An essential switch in subunit composition of a chromatin remodeling complex during neural development.</title>
        <authorList>
            <person name="Lessard J."/>
            <person name="Wu J.I."/>
            <person name="Ranish J.A."/>
            <person name="Wan M."/>
            <person name="Winslow M.M."/>
            <person name="Staahl B.T."/>
            <person name="Wu H."/>
            <person name="Aebersold R."/>
            <person name="Graef I.A."/>
            <person name="Crabtree G.R."/>
        </authorList>
    </citation>
    <scope>FUNCTION</scope>
    <scope>FUNCTION OF THE NBAF AND NPBAF COMPLEXES</scope>
    <scope>IDENTIFICATION BY MASS SPECTROMETRY</scope>
    <scope>IDENTIFICATION IN THE NBAF AND NPBAF COMPLEXES</scope>
    <scope>INTERACTION WITH PHF10</scope>
</reference>
<reference key="5">
    <citation type="journal article" date="2006" name="EMBO J.">
        <title>Skeletal muscle specification by myogenin and Mef2D via the SWI/SNF ATPase Brg1.</title>
        <authorList>
            <person name="Ohkawa Y."/>
            <person name="Marfella C.G."/>
            <person name="Imbalzano A.N."/>
        </authorList>
    </citation>
    <scope>INTERACTION WITH MYOG</scope>
</reference>
<reference key="6">
    <citation type="journal article" date="2007" name="Proc. Natl. Acad. Sci. U.S.A.">
        <title>Large-scale phosphorylation analysis of mouse liver.</title>
        <authorList>
            <person name="Villen J."/>
            <person name="Beausoleil S.A."/>
            <person name="Gerber S.A."/>
            <person name="Gygi S.P."/>
        </authorList>
    </citation>
    <scope>PHOSPHORYLATION [LARGE SCALE ANALYSIS] AT SER-610 AND SER-613</scope>
    <scope>IDENTIFICATION BY MASS SPECTROMETRY [LARGE SCALE ANALYSIS]</scope>
    <source>
        <tissue>Liver</tissue>
    </source>
</reference>
<reference key="7">
    <citation type="journal article" date="2009" name="Immunity">
        <title>The phagosomal proteome in interferon-gamma-activated macrophages.</title>
        <authorList>
            <person name="Trost M."/>
            <person name="English L."/>
            <person name="Lemieux S."/>
            <person name="Courcelles M."/>
            <person name="Desjardins M."/>
            <person name="Thibault P."/>
        </authorList>
    </citation>
    <scope>IDENTIFICATION BY MASS SPECTROMETRY [LARGE SCALE ANALYSIS]</scope>
</reference>
<reference key="8">
    <citation type="journal article" date="2010" name="Cell">
        <title>A tissue-specific atlas of mouse protein phosphorylation and expression.</title>
        <authorList>
            <person name="Huttlin E.L."/>
            <person name="Jedrychowski M.P."/>
            <person name="Elias J.E."/>
            <person name="Goswami T."/>
            <person name="Rad R."/>
            <person name="Beausoleil S.A."/>
            <person name="Villen J."/>
            <person name="Haas W."/>
            <person name="Sowa M.E."/>
            <person name="Gygi S.P."/>
        </authorList>
    </citation>
    <scope>PHOSPHORYLATION [LARGE SCALE ANALYSIS] AT SER-610; SER-613; SER-695; SER-699; THR-1390; SER-1536; SER-1541 AND SER-1552</scope>
    <scope>IDENTIFICATION BY MASS SPECTROMETRY [LARGE SCALE ANALYSIS]</scope>
    <source>
        <tissue>Brain</tissue>
        <tissue>Brown adipose tissue</tissue>
        <tissue>Heart</tissue>
        <tissue>Kidney</tissue>
        <tissue>Lung</tissue>
        <tissue>Pancreas</tissue>
        <tissue>Spleen</tissue>
        <tissue>Testis</tissue>
    </source>
</reference>
<reference key="9">
    <citation type="journal article" date="2010" name="Mol. Cell">
        <title>Jmjd3 and UTX play a demethylase-independent role in chromatin remodeling to regulate T-box family member-dependent gene expression.</title>
        <authorList>
            <person name="Miller S.A."/>
            <person name="Mohn S.E."/>
            <person name="Weinmann A.S."/>
        </authorList>
    </citation>
    <scope>INTERACTION WITH KDM6A; KDM6B AND TBX21</scope>
</reference>
<reference key="10">
    <citation type="journal article" date="2011" name="PLoS ONE">
        <title>SAF-A forms a complex with BRG1 and both components are required for RNA polymerase II mediated transcription.</title>
        <authorList>
            <person name="Vizlin-Hodzic D."/>
            <person name="Runnberg R."/>
            <person name="Ryme J."/>
            <person name="Simonsson S."/>
            <person name="Simonsson T."/>
        </authorList>
    </citation>
    <scope>INTERACTION WITH HNRNPU</scope>
    <scope>SUBCELLULAR LOCATION</scope>
</reference>
<reference key="11">
    <citation type="journal article" date="2012" name="J. Biol. Chem.">
        <title>SWI/SNF chromatin-remodeling factors: multiscale analyses and diverse functions.</title>
        <authorList>
            <person name="Euskirchen G."/>
            <person name="Auerbach R.K."/>
            <person name="Snyder M."/>
        </authorList>
    </citation>
    <scope>REVIEW ON SWI/SNF CHROMATIN REMODELING COMPLEXES</scope>
</reference>
<reference key="12">
    <citation type="journal article" date="2015" name="Development">
        <title>Evf2 lncRNA/BRG1/DLX1 interactions reveal RNA-dependent inhibition of chromatin remodeling.</title>
        <authorList>
            <person name="Cajigas I."/>
            <person name="Leib D.E."/>
            <person name="Cochrane J."/>
            <person name="Luo H."/>
            <person name="Swyter K.R."/>
            <person name="Chen S."/>
            <person name="Clark B.S."/>
            <person name="Thompson J."/>
            <person name="Yates J.R. III"/>
            <person name="Kingston R.E."/>
            <person name="Kohtz J.D."/>
        </authorList>
    </citation>
    <scope>FUNCTION</scope>
    <scope>INTERACTION WITH DLX1</scope>
    <scope>SUBCELLULAR LOCATION</scope>
    <scope>RNA-BINDING REGION</scope>
</reference>
<reference key="13">
    <citation type="journal article" date="2015" name="Sci. Adv.">
        <title>Mammalian SWI/SNF chromatin remodeling complexes and cancer: Mechanistic insights gained from human genomics.</title>
        <authorList>
            <person name="Kadoch C."/>
            <person name="Crabtree G.R."/>
        </authorList>
    </citation>
    <scope>REVIEW ON SWI/SNF CHROMATIN REMODELING COMPLEXES</scope>
</reference>
<reference key="14">
    <citation type="journal article" date="2018" name="J. Biol. Chem.">
        <title>Glioma tumor suppressor candidate region gene 1 (GLTSCR1) and its paralog GLTSCR1-like form SWI/SNF chromatin remodeling subcomplexes.</title>
        <authorList>
            <person name="Alpsoy A."/>
            <person name="Dykhuizen E.C."/>
        </authorList>
    </citation>
    <scope>IDENTIFICATION IN THE GBAF COMPLEX</scope>
</reference>
<reference key="15">
    <citation type="journal article" date="2020" name="Nucleic Acids Res.">
        <title>HRP2-DPF3a-BAF complex coordinates histone modification and chromatin remodeling to regulate myogenic gene transcription.</title>
        <authorList>
            <person name="Zhu X."/>
            <person name="Lan B."/>
            <person name="Yi X."/>
            <person name="He C."/>
            <person name="Dang L."/>
            <person name="Zhou X."/>
            <person name="Lu Y."/>
            <person name="Sun Y."/>
            <person name="Liu Z."/>
            <person name="Bai X."/>
            <person name="Zhang K."/>
            <person name="Li B."/>
            <person name="Li M.J."/>
            <person name="Chen Y."/>
            <person name="Zhang L."/>
        </authorList>
    </citation>
    <scope>INTERACTION WITH HDGFL2</scope>
</reference>
<reference key="16">
    <citation type="journal article" date="2021" name="Cell Rep.">
        <title>Defective brown adipose tissue thermogenesis and impaired glucose metabolism in mice lacking Letmd1.</title>
        <authorList>
            <person name="Choi K.M."/>
            <person name="Kim J.H."/>
            <person name="Kong X."/>
            <person name="Isik M."/>
            <person name="Zhang J."/>
            <person name="Lim H.W."/>
            <person name="Yoon J.C."/>
        </authorList>
    </citation>
    <scope>FUNCTION</scope>
    <scope>INTERACTION WITH SMARCA4</scope>
    <scope>SUBCELLULAR LOCATION</scope>
</reference>
<reference key="17">
    <citation type="journal article" date="2024" name="J. Med. Genet.">
        <title>SMARCA4 mutation causes human otosclerosis and a similar phenotype in mice.</title>
        <authorList>
            <person name="Drabkin M."/>
            <person name="Jean M.M."/>
            <person name="Noy Y."/>
            <person name="Halperin D."/>
            <person name="Yogev Y."/>
            <person name="Wormser O."/>
            <person name="Proskorovski-Ohayon R."/>
            <person name="Dolgin V."/>
            <person name="Levaot N."/>
            <person name="Brumfeld V."/>
            <person name="Ovadia S."/>
            <person name="Kishner M."/>
            <person name="Kazenell U."/>
            <person name="Avraham K.B."/>
            <person name="Shelef I."/>
            <person name="Birk O.S."/>
        </authorList>
    </citation>
    <scope>MUTAGENESIS OF GLU-1544</scope>
</reference>
<sequence>MSTPDPPLGGTPRPGPSPGPGPSPGAMLGPSPGPSPGSAHSMMGPSPGPPSAGHPMPTQGPGGYPQDNMHQMHKPMESMHEKGMPDDPRYNQMKGMGMRSGAHTGMAPPPSPMDQHSQGYPSPLGGSEHASSPVPASGPSSGPQMSSGPGGAPLDGSDPQALGQQNRGPTPFNQNQLHQLRAQIMAYKMLARGQPLPDHLQMAVQGKRPMPGMQQQMPTLPPPSVSATGPGPGPGPGPGPGPGPAPPNYSRPHGMGGPNMPPPGPSGVPPGMPGQPPGGPPKPWPEGPMANAAAPTSTPQKLIPPQPTGRPSPAPPAVPPAASPVMPPQTQSPGQPAQPAPLVPLHQKQSRITPIQKPRGLDPVEILQEREYRLQARIAHRIQELENLPGSLAGDLRTKATIELKALRLLNFQRQLRQEVVVCMRRDTALETALNAKAYKRSKRQSLREARITEKLEKQQKIEQERKRRQKHQEYLNSILQHAKDFREYHRSVTGKLQKLTKAVATYHANTEREQKKENERIEKERMRRLMAEDEEGYRKLIDQKKDKRLAYLLQQTDEYVANLTELVRQHKAAQVAKEKKKKKKKKKAENAEGQTPAIGPDGEPLDETSQMSDLPVKVIHVESGKILTGTDAPKAGQLEAWLEMNPGYEVAPRSDSEESGSEEEEEEEEEEQPQPAQPPTLPVEEKKKIPDPDSDDVSEVDARHIIENAKQDVDDEYGVSQALARGLQSYYAVAHAVTERVDKQSALMVNGVLKQYQIKGLEWLVSLYNNNLNGILADEMGLGKTIQTIALITYLMEHKRINGPFLIIVPLSTLSNWAYEFDKWAPSVVKVSYKGSPAARRAFVPQLRSGKFNVLLTTYEYIIKDKHILAKIRWKYMIVDEGHRMKNHHCKLTQVLNTHYVAPRRLLLTGTPLQNKLPELWALLNFLLPTIFKSCSTFEQWFNAPFAMTGEKVDLNEEETILIIRRLHKVLRPFLLRRLKKEVEAQLPEKVEYVIKCDMSALQRVLYRHMQAKGVLLTDGSEKDKKGKGGTKTLMNTIMQLRKICNHPYMFQHIEESFSEHLGFTGGIVQGLDLYRASGKFELLDRILPKLRATNHKVLLFCQMTSLMTIMEDYFAYRGFKYLRLDGTTKAEDRGMLLKTFNEPGSEYFIFLLSTRAGGLGLNLQSADTVIIFDSDWNPHQDLQAQDRAHRIGQQNEVRVLRLCTVNSVEEKILAAAKYKLNVDQKVIQAGMFDQKSSSHERRAFLQAILEHEEQDEEEDEVPDDETVNQMIARHEEEFDLFMRMDLDRRREEARNPKRKPRLMEEDELPSWIIKDDAEVERLTCEEEEEKMFGRGSRHRKEVDYSDSLTEKQWLKAIEEGTLEEIEEEVRQKKSSRKRKRDSEAGSSTPTTSTRSRDKDEESKKQKKRGRPPAEKLSPNPPNLTKKMKKIVDAVIKYKDSSGRQLSEVFIQLPSRKELPEYYELIRKPVDFKKIKERIRNHKYRSLNDLEKDVMLLCQNAQTFNLEGSLIYEDSIVLQSVFTSVRQKIEKEDDSEGEESEEEEEGEEEGSESESRSVKVKIKLGRKEKAQDRLKGGRRRPSRGSRAKPVVSDDDSEEEQEEDRSGSGSEED</sequence>
<evidence type="ECO:0000250" key="1"/>
<evidence type="ECO:0000250" key="2">
    <source>
        <dbReference type="UniProtKB" id="P51532"/>
    </source>
</evidence>
<evidence type="ECO:0000250" key="3">
    <source>
        <dbReference type="UniProtKB" id="Q6DIC0"/>
    </source>
</evidence>
<evidence type="ECO:0000250" key="4">
    <source>
        <dbReference type="UniProtKB" id="Q8K1P7"/>
    </source>
</evidence>
<evidence type="ECO:0000255" key="5">
    <source>
        <dbReference type="PROSITE-ProRule" id="PRU00035"/>
    </source>
</evidence>
<evidence type="ECO:0000255" key="6">
    <source>
        <dbReference type="PROSITE-ProRule" id="PRU00541"/>
    </source>
</evidence>
<evidence type="ECO:0000255" key="7">
    <source>
        <dbReference type="PROSITE-ProRule" id="PRU00542"/>
    </source>
</evidence>
<evidence type="ECO:0000255" key="8">
    <source>
        <dbReference type="PROSITE-ProRule" id="PRU00549"/>
    </source>
</evidence>
<evidence type="ECO:0000255" key="9">
    <source>
        <dbReference type="PROSITE-ProRule" id="PRU01001"/>
    </source>
</evidence>
<evidence type="ECO:0000256" key="10">
    <source>
        <dbReference type="SAM" id="MobiDB-lite"/>
    </source>
</evidence>
<evidence type="ECO:0000269" key="11">
    <source>
    </source>
</evidence>
<evidence type="ECO:0000269" key="12">
    <source>
    </source>
</evidence>
<evidence type="ECO:0000269" key="13">
    <source>
    </source>
</evidence>
<evidence type="ECO:0000269" key="14">
    <source>
    </source>
</evidence>
<evidence type="ECO:0000269" key="15">
    <source>
    </source>
</evidence>
<evidence type="ECO:0000269" key="16">
    <source>
    </source>
</evidence>
<evidence type="ECO:0000269" key="17">
    <source>
    </source>
</evidence>
<evidence type="ECO:0000269" key="18">
    <source>
    </source>
</evidence>
<evidence type="ECO:0000269" key="19">
    <source>
    </source>
</evidence>
<evidence type="ECO:0000303" key="20">
    <source>
    </source>
</evidence>
<evidence type="ECO:0000303" key="21">
    <source>
    </source>
</evidence>
<evidence type="ECO:0000303" key="22">
    <source>
    </source>
</evidence>
<evidence type="ECO:0000303" key="23">
    <source>
    </source>
</evidence>
<evidence type="ECO:0000303" key="24">
    <source>
    </source>
</evidence>
<evidence type="ECO:0000305" key="25"/>
<evidence type="ECO:0007744" key="26">
    <source>
    </source>
</evidence>
<evidence type="ECO:0007744" key="27">
    <source>
    </source>
</evidence>
<organism>
    <name type="scientific">Mus musculus</name>
    <name type="common">Mouse</name>
    <dbReference type="NCBI Taxonomy" id="10090"/>
    <lineage>
        <taxon>Eukaryota</taxon>
        <taxon>Metazoa</taxon>
        <taxon>Chordata</taxon>
        <taxon>Craniata</taxon>
        <taxon>Vertebrata</taxon>
        <taxon>Euteleostomi</taxon>
        <taxon>Mammalia</taxon>
        <taxon>Eutheria</taxon>
        <taxon>Euarchontoglires</taxon>
        <taxon>Glires</taxon>
        <taxon>Rodentia</taxon>
        <taxon>Myomorpha</taxon>
        <taxon>Muroidea</taxon>
        <taxon>Muridae</taxon>
        <taxon>Murinae</taxon>
        <taxon>Mus</taxon>
        <taxon>Mus</taxon>
    </lineage>
</organism>
<name>SMCA4_MOUSE</name>
<comment type="function">
    <text evidence="2 4 12 15 18">ATPase involved in transcriptional activation and repression of select genes by chromatin remodeling (alteration of DNA-nucleosome topology). Component of SWI/SNF chromatin remodeling complexes that carry out key enzymatic activities, changing chromatin structure by altering DNA-histone contacts within a nucleosome in an ATP-dependent manner (PubMed:17640523). Component of the CREST-BRG1 complex, a multiprotein complex that regulates promoter activation by orchestrating the calcium-dependent release of a repressor complex and the recruitment of an activator complex. In resting neurons, transcription of the c-FOS promoter is inhibited by SMARCA4-dependent recruitment of a phospho-RB1-HDAC repressor complex. Upon calcium influx, RB1 is dephosphorylated by calcineurin, which leads to release of the repressor complex. At the same time, there is increased recruitment of CREBBP to the promoter by a CREST-dependent mechanism, which leads to transcriptional activation. The CREST-BRG1 complex also binds to the NR2B promoter, and activity-dependent induction of NR2B expression involves the release of HDAC1 and recruitment of CREBBP (By similarity). Belongs to the neural progenitors-specific chromatin remodeling complex (npBAF complex) and the neuron-specific chromatin remodeling complex (nBAF complex). During neural development, a switch from a stem/progenitor to a postmitotic chromatin remodeling mechanism occurs as neurons exit the cell cycle and become committed to their adult state. The transition from proliferating neural stem/progenitor cells to postmitotic neurons requires a switch in subunit composition of the npBAF and nBAF complexes. As neural progenitors exit mitosis and differentiate into neurons, npBAF complexes which contain ACTL6A/BAF53A and PHF10/BAF45A, are exchanged for homologous alternative ACTL6B/BAF53B and DPF1/BAF45B or DPF3/BAF45C subunits in neuron-specific complexes (nBAF). The npBAF complex is essential for the self-renewal/proliferative capacity of the multipotent neural stem cells. The nBAF complex along with CREST plays a role in regulating the activity of genes essential for dendrite growth. SMARCA4/BAF190A may promote neural stem cell self-renewal/proliferation by enhancing Notch-dependent proliferative signals, while concurrently making the neural stem cell insensitive to SHH-dependent differentiating cues (PubMed:17640523). Acts as a corepressor of ZEB1 to regulate E-cadherin transcription and is required for induction of epithelial-mesenchymal transition (EMT) by ZEB1 (By similarity). Binds via DLX1 to enhancers located in the intergenic region between DLX5 and DLX6 and this binding is stabilized by the long non-coding RNA (lncRNA) Evf2 (PubMed:26138476). Binds to RNA in a promiscuous manner (PubMed:26138476). In brown adipose tissue, involved in the regulation of thermogenic genes expression (PubMed:34910916).</text>
</comment>
<comment type="catalytic activity">
    <reaction evidence="2">
        <text>ATP + H2O = ADP + phosphate + H(+)</text>
        <dbReference type="Rhea" id="RHEA:13065"/>
        <dbReference type="ChEBI" id="CHEBI:15377"/>
        <dbReference type="ChEBI" id="CHEBI:15378"/>
        <dbReference type="ChEBI" id="CHEBI:30616"/>
        <dbReference type="ChEBI" id="CHEBI:43474"/>
        <dbReference type="ChEBI" id="CHEBI:456216"/>
    </reaction>
    <physiologicalReaction direction="left-to-right" evidence="2">
        <dbReference type="Rhea" id="RHEA:13066"/>
    </physiologicalReaction>
</comment>
<comment type="activity regulation">
    <text evidence="15">Binding to RNAs including lncRNA Evf2 leads to inhibition of SMARCA4 ATPase and chromatin remodeling activities.</text>
</comment>
<comment type="subunit">
    <text evidence="2 11 12 13 14 15 16 17 18 22 24">Component of the multiprotein chromatin-remodeling complexes SWI/SNF: SWI/SNF-A (BAF), SWI/SNF-B (PBAF) and related complexes. The canonical complex contains a catalytic subunit (either SMARCA4/BRG1/BAF190A or SMARCA2/BRM/BAF190B) and at least SMARCE1, ACTL6A/BAF53, SMARCC1/BAF155, SMARCC2/BAF170, and SMARCB1/SNF5/BAF47. Other subunits specific to each of the complexes may also be present permitting several possible developmental- and tissue-specific combinations (Probable). Component of the BAF complex, which includes at least actin (ACTB), ARID1A/BAF250A, ARID1B/BAF250B, SMARCA2/BRM, SMARCA4/BRG1/BAF190A, ACTL6A/BAF53, ACTL6B/BAF53B, SMARCE1/BAF57, SMARCC1/BAF155, SMARCC2/BAF170, SMARCB1/SNF5/INI1, and one or more SMARCD1/BAF60A, SMARCD2/BAF60B, or SMARCD3/BAF60C. In muscle cells, the BAF complex also contains DPF3. Component of neural progenitors-specific chromatin remodeling complex (npBAF complex) composed of at least, ARID1A/BAF250A or ARID1B/BAF250B, SMARCD1/BAF60A, SMARCD3/BAF60C, SMARCA2/BRM/BAF190B, SMARCA4/BRG1/BAF190A, SMARCB1/BAF47, SMARCC1/BAF155, SMARCE1/BAF57, SMARCC2/BAF170, PHF10/BAF45A, ACTL6A/BAF53A and actin. Component of neuron-specific chromatin remodeling complex (nBAF complex) composed of at least, ARID1A/BAF250A or ARID1B/BAF250B, SMARCD1/BAF60A, SMARCD3/BAF60C, SMARCA2/BRM/BAF190B, SMARCA4/BRG1/BAF190A, SMARCB1/BAF47, SMARCC1/BAF155, SMARCE1/BAF57, SMARCC2/BAF170, DPF1/BAF45B, DPF3/BAF45C, ACTL6B/BAF53B and actin (PubMed:17640523). Component of the SWI/SNF-B (PBAF) chromatin remodeling complex, at least composed of SMARCA4/BRG1, SMARCB1/BAF47/SNF5, ACTL6A/BAF53A or ACTL6B/BAF53B, SMARCE1/BAF57, SMARCD1/BAF60A, SMARCD2/BAF60B, perhaps SMARCD3/BAF60C, SMARCC1/BAF155, SMARCC2/BAF170, PBRM1/BAF180, ARID2/BAF200 and actin. Component of SWI/SNF (GBAF) subcomplex, which includes at least BICRA or BICRAL (mutually exclusive), BRD9, SS18, SMARCA2/BRM, SMARCA4/BRG1/BAF190A, ACTL6A/BAF53, SMARCC1/BAF155, and SMARCD1/BAF60A (PubMed:29374058). Component of the BAF53 complex, at least composed of BAF53A, RUVBL1, SMARCA4/BRG1/BAF190A, and TRRAP, which preferentially acetylates histone H4 (and H2A) within nucleosomes (By similarity). Component of the CREST-BRG1 complex, at least composed of SMARCA4/BRG1/BAF190A, SS18L1/CREST, HDAC1, RB1 and SP1 (By similarity). Interacts with PHF10/BAF45A (PubMed:17640523). Interacts with MYOG (PubMed:16424906). Interacts directly with IKFZ1; the interaction associates IKFZ1 with the BAF complex. Interacts with ZEB1 (via N-terminus). Interacts with NR3C1, PGR, SMARD1, TOPBP1 and ZMIM2/ZIMP7. Interacts with (via the bromodomain) with TERT; the interaction regulates Wnt-mediated signaling (By similarity). Interacts with KDM6A and KDM6B (PubMed:21095589). Interacts with TBX21 in a KDM6B-dependent manner (PubMed:21095589). Interacts with HNRNPU; this interaction occurs in embryonic stem cells and stimulates global Pol II-mediated transcription (PubMed:22162999). Interacts with ACTL6A (By similarity). Interacts with DLX1 (PubMed:26138476). Interacts with DPF2 (By similarity). Interacts with DPF3a (isoform 2 of DPF3/BAF45C) (By similarity). Interacts with HDGFL2 in a DPF3a-dependent manner (PubMed:32459350). May interact with ADNP2 (By similarity). Interacts with LETMD1 (via C-terminal); the interaction regulates transcriptional expression of thermogenic genes in brown adipose tissue (PubMed:34910916). Interacts (via KIKL motif) with BRD3 (via NET domain) (By similarity).</text>
</comment>
<comment type="interaction">
    <interactant intactId="EBI-1210244">
        <id>Q3TKT4</id>
    </interactant>
    <interactant intactId="EBI-371499">
        <id>A2BH40</id>
        <label>Arid1a</label>
    </interactant>
    <organismsDiffer>false</organismsDiffer>
    <experiments>7</experiments>
</comment>
<comment type="interaction">
    <interactant intactId="EBI-1210244">
        <id>Q3TKT4</id>
    </interactant>
    <interactant intactId="EBI-6900614">
        <id>E9Q4N7</id>
        <label>Arid1b</label>
    </interactant>
    <organismsDiffer>false</organismsDiffer>
    <experiments>5</experiments>
</comment>
<comment type="interaction">
    <interactant intactId="EBI-1210244">
        <id>Q3TKT4</id>
    </interactant>
    <interactant intactId="EBI-301912">
        <id>O09106</id>
        <label>Hdac1</label>
    </interactant>
    <organismsDiffer>false</organismsDiffer>
    <experiments>2</experiments>
</comment>
<comment type="interaction">
    <interactant intactId="EBI-1210244">
        <id>Q3TKT4</id>
    </interactant>
    <interactant intactId="EBI-302251">
        <id>P70288</id>
        <label>Hdac2</label>
    </interactant>
    <organismsDiffer>false</organismsDiffer>
    <experiments>4</experiments>
</comment>
<comment type="interaction">
    <interactant intactId="EBI-1210244">
        <id>Q3TKT4</id>
    </interactant>
    <interactant intactId="EBI-302263">
        <id>O88895</id>
        <label>Hdac3</label>
    </interactant>
    <organismsDiffer>false</organismsDiffer>
    <experiments>2</experiments>
</comment>
<comment type="interaction">
    <interactant intactId="EBI-1210244">
        <id>Q3TKT4</id>
    </interactant>
    <interactant intactId="EBI-645361">
        <id>Q99N13</id>
        <label>Hdac9</label>
    </interactant>
    <organismsDiffer>false</organismsDiffer>
    <experiments>3</experiments>
</comment>
<comment type="interaction">
    <interactant intactId="EBI-1210244">
        <id>Q3TKT4</id>
    </interactant>
    <interactant intactId="EBI-529674">
        <id>Q8VEK3</id>
        <label>Hnrnpu</label>
    </interactant>
    <organismsDiffer>false</organismsDiffer>
    <experiments>3</experiments>
</comment>
<comment type="interaction">
    <interactant intactId="EBI-1210244">
        <id>Q3TKT4</id>
    </interactant>
    <interactant intactId="EBI-1188816">
        <id>Q9Z2D6</id>
        <label>Mecp2</label>
    </interactant>
    <organismsDiffer>false</organismsDiffer>
    <experiments>2</experiments>
</comment>
<comment type="interaction">
    <interactant intactId="EBI-1210244">
        <id>Q3TKT4</id>
    </interactant>
    <interactant intactId="EBI-1392707">
        <id>Q01705</id>
        <label>Notch1</label>
    </interactant>
    <organismsDiffer>false</organismsDiffer>
    <experiments>2</experiments>
</comment>
<comment type="interaction">
    <interactant intactId="EBI-1210244">
        <id>Q3TKT4</id>
    </interactant>
    <interactant intactId="EBI-642213">
        <id>P11103</id>
        <label>Parp1</label>
    </interactant>
    <organismsDiffer>false</organismsDiffer>
    <experiments>2</experiments>
</comment>
<comment type="interaction">
    <interactant intactId="EBI-1210244">
        <id>Q3TKT4</id>
    </interactant>
    <interactant intactId="EBI-971782">
        <id>P13405</id>
        <label>Rb1</label>
    </interactant>
    <organismsDiffer>false</organismsDiffer>
    <experiments>3</experiments>
</comment>
<comment type="interaction">
    <interactant intactId="EBI-1210244">
        <id>Q3TKT4</id>
    </interactant>
    <interactant intactId="EBI-648047">
        <id>P97496</id>
        <label>Smarcc1</label>
    </interactant>
    <organismsDiffer>false</organismsDiffer>
    <experiments>7</experiments>
</comment>
<comment type="interaction">
    <interactant intactId="EBI-1210244">
        <id>Q3TKT4</id>
    </interactant>
    <interactant intactId="EBI-7525857">
        <id>Q6P9Z1</id>
        <label>Smarcd3</label>
    </interactant>
    <organismsDiffer>false</organismsDiffer>
    <experiments>3</experiments>
</comment>
<comment type="interaction">
    <interactant intactId="EBI-1210244">
        <id>Q3TKT4</id>
    </interactant>
    <interactant intactId="EBI-9662790">
        <id>O70372</id>
        <label>Tert</label>
    </interactant>
    <organismsDiffer>false</organismsDiffer>
    <experiments>2</experiments>
</comment>
<comment type="interaction">
    <interactant intactId="EBI-1210244">
        <id>Q3TKT4</id>
    </interactant>
    <interactant intactId="EBI-642809">
        <id>Q01320</id>
        <label>Top2a</label>
    </interactant>
    <organismsDiffer>false</organismsDiffer>
    <experiments>3</experiments>
</comment>
<comment type="interaction">
    <interactant intactId="EBI-1210244">
        <id>Q3TKT4</id>
    </interactant>
    <interactant intactId="EBI-647033">
        <id>Q6P1E1</id>
        <label>Zmiz1</label>
    </interactant>
    <organismsDiffer>false</organismsDiffer>
    <experiments>2</experiments>
</comment>
<comment type="interaction">
    <interactant intactId="EBI-1210244">
        <id>Q3TKT4</id>
    </interactant>
    <interactant intactId="EBI-918425">
        <id>Q62908</id>
        <label>Csrp2</label>
    </interactant>
    <organismsDiffer>true</organismsDiffer>
    <experiments>3</experiments>
</comment>
<comment type="interaction">
    <interactant intactId="EBI-1210244">
        <id>Q3TKT4</id>
    </interactant>
    <interactant intactId="EBI-491274">
        <id>P06400</id>
        <label>RB1</label>
    </interactant>
    <organismsDiffer>true</organismsDiffer>
    <experiments>4</experiments>
</comment>
<comment type="subcellular location">
    <subcellularLocation>
        <location evidence="8 15">Nucleus</location>
    </subcellularLocation>
    <text evidence="2 15">Colocalizes with long non-coding RNA Evf2 in nuclear RNA clouds (PubMed:26138476). Localizes to sites of DNA damage (By similarity).</text>
</comment>
<comment type="alternative products">
    <event type="alternative splicing"/>
    <isoform>
        <id>Q3TKT4-1</id>
        <name>1</name>
        <sequence type="displayed"/>
    </isoform>
    <isoform>
        <id>Q3TKT4-2</id>
        <name>2</name>
        <sequence type="described" ref="VSP_038696"/>
    </isoform>
</comment>
<comment type="domain">
    <text evidence="2">The KIKL motif recognizes and binds the NET domain of BRD3.</text>
</comment>
<comment type="similarity">
    <text evidence="25">Belongs to the SNF2/RAD54 helicase family.</text>
</comment>
<comment type="caution">
    <text evidence="22 24">Like other proteins within the SNF2 family, they do not possess helicase activity but instead remodel chromatin via an ATP-dependent translocation mechanism.</text>
</comment>
<accession>Q3TKT4</accession>
<accession>Q3TUD7</accession>
<accession>Q6AXG8</accession>
<proteinExistence type="evidence at protein level"/>
<feature type="chain" id="PRO_0000391343" description="SWI/SNF-related matrix-associated actin-dependent regulator of chromatin subfamily A member 4">
    <location>
        <begin position="1"/>
        <end position="1613"/>
    </location>
</feature>
<feature type="domain" description="QLQ" evidence="9">
    <location>
        <begin position="171"/>
        <end position="206"/>
    </location>
</feature>
<feature type="domain" description="HSA" evidence="8">
    <location>
        <begin position="460"/>
        <end position="532"/>
    </location>
</feature>
<feature type="domain" description="Helicase ATP-binding" evidence="6">
    <location>
        <begin position="766"/>
        <end position="931"/>
    </location>
</feature>
<feature type="domain" description="Helicase C-terminal" evidence="7">
    <location>
        <begin position="1084"/>
        <end position="1246"/>
    </location>
</feature>
<feature type="domain" description="Bromo" evidence="5">
    <location>
        <begin position="1420"/>
        <end position="1530"/>
    </location>
</feature>
<feature type="region of interest" description="Necessary for interaction with SS18L1/CREST" evidence="1">
    <location>
        <begin position="1"/>
        <end position="282"/>
    </location>
</feature>
<feature type="region of interest" description="Disordered" evidence="10">
    <location>
        <begin position="1"/>
        <end position="177"/>
    </location>
</feature>
<feature type="region of interest" description="Disordered" evidence="10">
    <location>
        <begin position="198"/>
        <end position="353"/>
    </location>
</feature>
<feature type="region of interest" description="RNA-binding region which is sufficient for binding to lncRNA Evf2" evidence="15">
    <location>
        <begin position="462"/>
        <end position="728"/>
    </location>
</feature>
<feature type="region of interest" description="Disordered" evidence="10">
    <location>
        <begin position="577"/>
        <end position="610"/>
    </location>
</feature>
<feature type="region of interest" description="Disordered" evidence="10">
    <location>
        <begin position="647"/>
        <end position="699"/>
    </location>
</feature>
<feature type="region of interest" description="Sufficient for interaction with DLX1" evidence="15">
    <location>
        <begin position="837"/>
        <end position="916"/>
    </location>
</feature>
<feature type="region of interest" description="Sufficient for interaction with DLX1" evidence="15">
    <location>
        <begin position="1247"/>
        <end position="1413"/>
    </location>
</feature>
<feature type="region of interest" description="Disordered" evidence="10">
    <location>
        <begin position="1366"/>
        <end position="1427"/>
    </location>
</feature>
<feature type="region of interest" description="Disordered" evidence="10">
    <location>
        <begin position="1530"/>
        <end position="1613"/>
    </location>
</feature>
<feature type="short sequence motif" description="DEGH box" evidence="1">
    <location>
        <begin position="881"/>
        <end position="884"/>
    </location>
</feature>
<feature type="short sequence motif" description="KIKL" evidence="2">
    <location>
        <begin position="1562"/>
        <end position="1565"/>
    </location>
</feature>
<feature type="compositionally biased region" description="Pro residues" evidence="10">
    <location>
        <begin position="1"/>
        <end position="23"/>
    </location>
</feature>
<feature type="compositionally biased region" description="Low complexity" evidence="10">
    <location>
        <begin position="24"/>
        <end position="45"/>
    </location>
</feature>
<feature type="compositionally biased region" description="Basic and acidic residues" evidence="10">
    <location>
        <begin position="74"/>
        <end position="89"/>
    </location>
</feature>
<feature type="compositionally biased region" description="Low complexity" evidence="10">
    <location>
        <begin position="130"/>
        <end position="147"/>
    </location>
</feature>
<feature type="compositionally biased region" description="Polar residues" evidence="10">
    <location>
        <begin position="162"/>
        <end position="177"/>
    </location>
</feature>
<feature type="compositionally biased region" description="Pro residues" evidence="10">
    <location>
        <begin position="231"/>
        <end position="249"/>
    </location>
</feature>
<feature type="compositionally biased region" description="Pro residues" evidence="10">
    <location>
        <begin position="259"/>
        <end position="286"/>
    </location>
</feature>
<feature type="compositionally biased region" description="Pro residues" evidence="10">
    <location>
        <begin position="302"/>
        <end position="327"/>
    </location>
</feature>
<feature type="compositionally biased region" description="Basic residues" evidence="10">
    <location>
        <begin position="579"/>
        <end position="588"/>
    </location>
</feature>
<feature type="compositionally biased region" description="Acidic residues" evidence="10">
    <location>
        <begin position="658"/>
        <end position="673"/>
    </location>
</feature>
<feature type="compositionally biased region" description="Basic and acidic residues" evidence="10">
    <location>
        <begin position="1396"/>
        <end position="1405"/>
    </location>
</feature>
<feature type="compositionally biased region" description="Acidic residues" evidence="10">
    <location>
        <begin position="1533"/>
        <end position="1553"/>
    </location>
</feature>
<feature type="compositionally biased region" description="Basic and acidic residues" evidence="10">
    <location>
        <begin position="1566"/>
        <end position="1576"/>
    </location>
</feature>
<feature type="compositionally biased region" description="Basic residues" evidence="10">
    <location>
        <begin position="1577"/>
        <end position="1587"/>
    </location>
</feature>
<feature type="compositionally biased region" description="Acidic residues" evidence="10">
    <location>
        <begin position="1593"/>
        <end position="1603"/>
    </location>
</feature>
<feature type="binding site" evidence="6">
    <location>
        <begin position="779"/>
        <end position="786"/>
    </location>
    <ligand>
        <name>ATP</name>
        <dbReference type="ChEBI" id="CHEBI:30616"/>
    </ligand>
</feature>
<feature type="site" description="Required for binding to 'Lys-15'-acetylated histone 3" evidence="1">
    <location>
        <begin position="1505"/>
        <end position="1506"/>
    </location>
</feature>
<feature type="modified residue" description="Phosphothreonine" evidence="2">
    <location>
        <position position="11"/>
    </location>
</feature>
<feature type="modified residue" description="N6-acetyllysine" evidence="2">
    <location>
        <position position="188"/>
    </location>
</feature>
<feature type="modified residue" description="Phosphothreonine" evidence="2">
    <location>
        <position position="353"/>
    </location>
</feature>
<feature type="modified residue" description="Phosphothreonine" evidence="2">
    <location>
        <position position="609"/>
    </location>
</feature>
<feature type="modified residue" description="Phosphoserine" evidence="26 27">
    <location>
        <position position="610"/>
    </location>
</feature>
<feature type="modified residue" description="Phosphoserine" evidence="26 27">
    <location>
        <position position="613"/>
    </location>
</feature>
<feature type="modified residue" description="N6-acetyllysine" evidence="3">
    <location>
        <position position="626"/>
    </location>
</feature>
<feature type="modified residue" description="Phosphoserine" evidence="27">
    <location>
        <position position="695"/>
    </location>
</feature>
<feature type="modified residue" description="Phosphoserine" evidence="27">
    <location>
        <position position="699"/>
    </location>
</feature>
<feature type="modified residue" description="Phosphoserine" evidence="2">
    <location>
        <position position="1349"/>
    </location>
</feature>
<feature type="modified residue" description="Phosphothreonine" evidence="27">
    <location>
        <position position="1390"/>
    </location>
</feature>
<feature type="modified residue" description="Phosphoserine" evidence="2">
    <location>
        <position position="1419"/>
    </location>
</feature>
<feature type="modified residue" description="Phosphoserine" evidence="27">
    <location>
        <position position="1536"/>
    </location>
</feature>
<feature type="modified residue" description="Phosphoserine" evidence="27">
    <location>
        <position position="1541"/>
    </location>
</feature>
<feature type="modified residue" description="Phosphoserine" evidence="27">
    <location>
        <position position="1552"/>
    </location>
</feature>
<feature type="modified residue" description="Phosphoserine" evidence="2">
    <location>
        <position position="1593"/>
    </location>
</feature>
<feature type="modified residue" description="Phosphoserine" evidence="2">
    <location>
        <position position="1597"/>
    </location>
</feature>
<feature type="cross-link" description="Glycyl lysine isopeptide (Lys-Gly) (interchain with G-Cter in SUMO2)" evidence="2">
    <location>
        <position position="1332"/>
    </location>
</feature>
<feature type="splice variant" id="VSP_038696" description="In isoform 2." evidence="20 21">
    <original>D</original>
    <variation>DS</variation>
    <location>
        <position position="1441"/>
    </location>
</feature>
<feature type="mutagenesis site" description="CRISP-Cas9 transgenic mice carrying this variant exhibit marked hearing impairment, with a highly irregular structure of the incus bone in the auditory bullae, causing disruption in the ossicular chain." evidence="19">
    <original>E</original>
    <variation>K</variation>
    <location>
        <position position="1544"/>
    </location>
</feature>
<feature type="sequence conflict" description="In Ref. 1; BAE36034." evidence="25" ref="1">
    <original>W</original>
    <variation>WLKT</variation>
    <location>
        <position position="1355"/>
    </location>
</feature>
<protein>
    <recommendedName>
        <fullName>SWI/SNF-related matrix-associated actin-dependent regulator of chromatin subfamily A member 4</fullName>
        <shortName>SMARCA4</shortName>
        <ecNumber evidence="2">3.6.4.-</ecNumber>
    </recommendedName>
    <alternativeName>
        <fullName>BRG1-associated factor 190A</fullName>
        <shortName>BAF190A</shortName>
    </alternativeName>
    <alternativeName>
        <fullName>Protein brahma homolog 1</fullName>
    </alternativeName>
    <alternativeName>
        <fullName>SNF2-beta</fullName>
    </alternativeName>
    <alternativeName>
        <fullName evidence="23">Transcription activator BRG1</fullName>
    </alternativeName>
</protein>
<gene>
    <name type="primary">Smarca4</name>
    <name type="synonym">Baf190a</name>
    <name type="synonym">Brg1</name>
    <name type="synonym">Snf2b</name>
    <name type="synonym">Snf2l4</name>
</gene>
<dbReference type="EC" id="3.6.4.-" evidence="2"/>
<dbReference type="EMBL" id="AK147285">
    <property type="protein sequence ID" value="BAE27821.1"/>
    <property type="molecule type" value="mRNA"/>
</dbReference>
<dbReference type="EMBL" id="AK160825">
    <property type="protein sequence ID" value="BAE36034.1"/>
    <property type="molecule type" value="mRNA"/>
</dbReference>
<dbReference type="EMBL" id="AK166837">
    <property type="protein sequence ID" value="BAE39059.1"/>
    <property type="molecule type" value="mRNA"/>
</dbReference>
<dbReference type="EMBL" id="BC079560">
    <property type="protein sequence ID" value="AAH79560.1"/>
    <property type="molecule type" value="mRNA"/>
</dbReference>
<dbReference type="EMBL" id="CH466522">
    <property type="protein sequence ID" value="EDL25209.1"/>
    <property type="molecule type" value="Genomic_DNA"/>
</dbReference>
<dbReference type="CCDS" id="CCDS22909.1">
    <molecule id="Q3TKT4-2"/>
</dbReference>
<dbReference type="CCDS" id="CCDS57662.1">
    <molecule id="Q3TKT4-1"/>
</dbReference>
<dbReference type="RefSeq" id="NP_001167549.1">
    <property type="nucleotide sequence ID" value="NM_001174078.1"/>
</dbReference>
<dbReference type="RefSeq" id="NP_001167550.1">
    <molecule id="Q3TKT4-1"/>
    <property type="nucleotide sequence ID" value="NM_001174079.1"/>
</dbReference>
<dbReference type="RefSeq" id="NP_035547.2">
    <molecule id="Q3TKT4-2"/>
    <property type="nucleotide sequence ID" value="NM_011417.3"/>
</dbReference>
<dbReference type="RefSeq" id="XP_006510180.2">
    <property type="nucleotide sequence ID" value="XM_006510117.2"/>
</dbReference>
<dbReference type="RefSeq" id="XP_006510182.2">
    <molecule id="Q3TKT4-2"/>
    <property type="nucleotide sequence ID" value="XM_006510119.2"/>
</dbReference>
<dbReference type="RefSeq" id="XP_006510183.2">
    <molecule id="Q3TKT4-1"/>
    <property type="nucleotide sequence ID" value="XM_006510120.2"/>
</dbReference>
<dbReference type="SMR" id="Q3TKT4"/>
<dbReference type="BioGRID" id="203336">
    <property type="interactions" value="94"/>
</dbReference>
<dbReference type="ComplexPortal" id="CPX-1233">
    <property type="entry name" value="SWI/SNF ATP-dependent chromatin remodeling complex, ACTL6A-ARID1A-SMARCA4 variant"/>
</dbReference>
<dbReference type="ComplexPortal" id="CPX-1235">
    <property type="entry name" value="SWI/SNF ATP-dependent chromatin remodeling complex, ACTL6A-ARID1B-SMARCA4 variant"/>
</dbReference>
<dbReference type="ComplexPortal" id="CPX-1237">
    <property type="entry name" value="SWI/SNF ATP-dependent chromatin remodeling complex, ACTL6B-ARID1A-SMARCA4 variant"/>
</dbReference>
<dbReference type="ComplexPortal" id="CPX-1239">
    <property type="entry name" value="SWI/SNF ATP-dependent chromatin remodeling complex, ACTL6B-ARID1B-SMARCA4 variant"/>
</dbReference>
<dbReference type="ComplexPortal" id="CPX-1241">
    <property type="entry name" value="Muscle cell-specific SWI/SNF ATP-dependent chromatin remodeling complex, ACTL6A-ARID1A-SMARCA4 variant"/>
</dbReference>
<dbReference type="ComplexPortal" id="CPX-1243">
    <property type="entry name" value="Muscle cell-specific SWI/SNF ATP-dependent chromatin remodeling complex, ACTL6A-ARID1B-SMARCA4 variant"/>
</dbReference>
<dbReference type="ComplexPortal" id="CPX-1245">
    <property type="entry name" value="Muscle cell-specific SWI/SNF ATP-dependent chromatin remodeling complex, ACTL6B-ARID1A-SMARCA4 variant"/>
</dbReference>
<dbReference type="ComplexPortal" id="CPX-1247">
    <property type="entry name" value="Muscle cell-specific SWI/SNF ATP-dependent chromatin remodeling complex, ACTL6B-ARID1B-SMARCA4 variant"/>
</dbReference>
<dbReference type="ComplexPortal" id="CPX-1248">
    <property type="entry name" value="Polybromo-associated SWI/SNF ATP-dependent chromatin remodeling complex, ACTL6A variant"/>
</dbReference>
<dbReference type="ComplexPortal" id="CPX-1250">
    <property type="entry name" value="Polybromo-associated SWI/SNF ATP-dependent chromatin remodeling complex, ACTL6B variant"/>
</dbReference>
<dbReference type="ComplexPortal" id="CPX-1251">
    <property type="entry name" value="Embryonic stem cell-specific SWI/SNF ATP-dependent chromatin remodeling complex"/>
</dbReference>
<dbReference type="ComplexPortal" id="CPX-1253">
    <property type="entry name" value="Neural progenitor-specific SWI/SNF ATP-dependent chromatin remodeling complex, ARID1A-SMARCA4 variant"/>
</dbReference>
<dbReference type="ComplexPortal" id="CPX-1255">
    <property type="entry name" value="Neural progenitor-specific SWI/SNF ATP-dependent chromatin remodeling complex, ARID1B-SMARCA4 variant"/>
</dbReference>
<dbReference type="ComplexPortal" id="CPX-1257">
    <property type="entry name" value="Neuron-specific SWI/SNF ATP-dependent chromatin remodeling complex, ARID1A-SMARCA4 variant"/>
</dbReference>
<dbReference type="ComplexPortal" id="CPX-1259">
    <property type="entry name" value="Neuron-specific SWI/SNF ATP-dependent chromatin remodeling complex, ARID1B-SMARCA4 variant"/>
</dbReference>
<dbReference type="ComplexPortal" id="CPX-1262">
    <property type="entry name" value="Brain-specific SWI/SNF ATP-dependent chromatin remodeling complex, ARID1A-SMARCA4 variant"/>
</dbReference>
<dbReference type="ComplexPortal" id="CPX-1264">
    <property type="entry name" value="Brain-specific SWI/SNF ATP-dependent chromatin remodeling complex, ARID1B-SMARCA4 variant"/>
</dbReference>
<dbReference type="ComplexPortal" id="CPX-4221">
    <property type="entry name" value="GBAF (SWI/SNF) ATP-dependent chromatin remodeling complex, ACTL6A-BICRA-SMARCA4 variant"/>
</dbReference>
<dbReference type="ComplexPortal" id="CPX-4222">
    <property type="entry name" value="GBAF (SWI/SNF) ATP-dependent chromatin remodeling complex, ACTL6A-BICRAL-SMARCA4 variant"/>
</dbReference>
<dbReference type="ComplexPortal" id="CPX-4229">
    <property type="entry name" value="GBAF (SWI/SNF) ATP-dependent chromatin remodeling complex, ACTL6B-BICRA-SMARCA4 variant"/>
</dbReference>
<dbReference type="ComplexPortal" id="CPX-4230">
    <property type="entry name" value="GBAF (SWI/SNF) ATP-dependent chromatin remodeling complex, ACTL6B-BICRAL-SMARCA4 variant"/>
</dbReference>
<dbReference type="CORUM" id="Q3TKT4"/>
<dbReference type="DIP" id="DIP-40650N"/>
<dbReference type="DIP" id="DIP-59249N"/>
<dbReference type="FunCoup" id="Q3TKT4">
    <property type="interactions" value="2893"/>
</dbReference>
<dbReference type="IntAct" id="Q3TKT4">
    <property type="interactions" value="50"/>
</dbReference>
<dbReference type="MINT" id="Q3TKT4"/>
<dbReference type="STRING" id="10090.ENSMUSP00000096547"/>
<dbReference type="GlyGen" id="Q3TKT4">
    <property type="glycosylation" value="2 sites, 1 O-linked glycan (1 site)"/>
</dbReference>
<dbReference type="iPTMnet" id="Q3TKT4"/>
<dbReference type="PhosphoSitePlus" id="Q3TKT4"/>
<dbReference type="SwissPalm" id="Q3TKT4"/>
<dbReference type="jPOST" id="Q3TKT4"/>
<dbReference type="PaxDb" id="10090-ENSMUSP00000034707"/>
<dbReference type="PeptideAtlas" id="Q3TKT4"/>
<dbReference type="ProteomicsDB" id="261524">
    <molecule id="Q3TKT4-1"/>
</dbReference>
<dbReference type="ProteomicsDB" id="261525">
    <molecule id="Q3TKT4-2"/>
</dbReference>
<dbReference type="Pumba" id="Q3TKT4"/>
<dbReference type="Antibodypedia" id="3778">
    <property type="antibodies" value="576 antibodies from 46 providers"/>
</dbReference>
<dbReference type="DNASU" id="20586"/>
<dbReference type="Ensembl" id="ENSMUST00000034707.15">
    <molecule id="Q3TKT4-2"/>
    <property type="protein sequence ID" value="ENSMUSP00000034707.9"/>
    <property type="gene ID" value="ENSMUSG00000032187.17"/>
</dbReference>
<dbReference type="Ensembl" id="ENSMUST00000174008.8">
    <molecule id="Q3TKT4-1"/>
    <property type="protein sequence ID" value="ENSMUSP00000133922.2"/>
    <property type="gene ID" value="ENSMUSG00000032187.17"/>
</dbReference>
<dbReference type="GeneID" id="20586"/>
<dbReference type="KEGG" id="mmu:20586"/>
<dbReference type="UCSC" id="uc009omd.2">
    <molecule id="Q3TKT4-2"/>
    <property type="organism name" value="mouse"/>
</dbReference>
<dbReference type="UCSC" id="uc009ome.2">
    <molecule id="Q3TKT4-1"/>
    <property type="organism name" value="mouse"/>
</dbReference>
<dbReference type="AGR" id="MGI:88192"/>
<dbReference type="CTD" id="6597"/>
<dbReference type="MGI" id="MGI:88192">
    <property type="gene designation" value="Smarca4"/>
</dbReference>
<dbReference type="VEuPathDB" id="HostDB:ENSMUSG00000032187"/>
<dbReference type="eggNOG" id="KOG0386">
    <property type="taxonomic scope" value="Eukaryota"/>
</dbReference>
<dbReference type="GeneTree" id="ENSGT00940000156887"/>
<dbReference type="HOGENOM" id="CLU_000315_15_0_1"/>
<dbReference type="InParanoid" id="Q3TKT4"/>
<dbReference type="OMA" id="YGPGHKL"/>
<dbReference type="OrthoDB" id="6017at2759"/>
<dbReference type="PhylomeDB" id="Q3TKT4"/>
<dbReference type="TreeFam" id="TF300785"/>
<dbReference type="Reactome" id="R-MMU-1266695">
    <property type="pathway name" value="Interleukin-7 signaling"/>
</dbReference>
<dbReference type="Reactome" id="R-MMU-201722">
    <property type="pathway name" value="Formation of the beta-catenin:TCF transactivating complex"/>
</dbReference>
<dbReference type="Reactome" id="R-MMU-3214858">
    <property type="pathway name" value="RMTs methylate histone arginines"/>
</dbReference>
<dbReference type="Reactome" id="R-MMU-3247509">
    <property type="pathway name" value="Chromatin modifying enzymes"/>
</dbReference>
<dbReference type="Reactome" id="R-MMU-8939243">
    <property type="pathway name" value="RUNX1 interacts with co-factors whose precise effect on RUNX1 targets is not known"/>
</dbReference>
<dbReference type="BioGRID-ORCS" id="20586">
    <property type="hits" value="21 hits in 88 CRISPR screens"/>
</dbReference>
<dbReference type="CD-CODE" id="3521A8E2">
    <property type="entry name" value="Synthetic Condensate 000312"/>
</dbReference>
<dbReference type="CD-CODE" id="BC554416">
    <property type="entry name" value="Synthetic Condensate 000308"/>
</dbReference>
<dbReference type="ChiTaRS" id="Smarca4">
    <property type="organism name" value="mouse"/>
</dbReference>
<dbReference type="PRO" id="PR:Q3TKT4"/>
<dbReference type="Proteomes" id="UP000000589">
    <property type="component" value="Chromosome 9"/>
</dbReference>
<dbReference type="RNAct" id="Q3TKT4">
    <property type="molecule type" value="protein"/>
</dbReference>
<dbReference type="Bgee" id="ENSMUSG00000032187">
    <property type="expression patterns" value="Expressed in rostral migratory stream and 316 other cell types or tissues"/>
</dbReference>
<dbReference type="ExpressionAtlas" id="Q3TKT4">
    <property type="expression patterns" value="baseline and differential"/>
</dbReference>
<dbReference type="GO" id="GO:0140092">
    <property type="term" value="C:bBAF complex"/>
    <property type="evidence" value="ECO:0000303"/>
    <property type="project" value="ComplexPortal"/>
</dbReference>
<dbReference type="GO" id="GO:0000785">
    <property type="term" value="C:chromatin"/>
    <property type="evidence" value="ECO:0000303"/>
    <property type="project" value="ComplexPortal"/>
</dbReference>
<dbReference type="GO" id="GO:0000791">
    <property type="term" value="C:euchromatin"/>
    <property type="evidence" value="ECO:0000314"/>
    <property type="project" value="MGI"/>
</dbReference>
<dbReference type="GO" id="GO:0140288">
    <property type="term" value="C:GBAF complex"/>
    <property type="evidence" value="ECO:0000303"/>
    <property type="project" value="ComplexPortal"/>
</dbReference>
<dbReference type="GO" id="GO:0000776">
    <property type="term" value="C:kinetochore"/>
    <property type="evidence" value="ECO:0000303"/>
    <property type="project" value="ComplexPortal"/>
</dbReference>
<dbReference type="GO" id="GO:0001673">
    <property type="term" value="C:male germ cell nucleus"/>
    <property type="evidence" value="ECO:0000314"/>
    <property type="project" value="MGI"/>
</dbReference>
<dbReference type="GO" id="GO:0071565">
    <property type="term" value="C:nBAF complex"/>
    <property type="evidence" value="ECO:0000314"/>
    <property type="project" value="UniProtKB"/>
</dbReference>
<dbReference type="GO" id="GO:0071564">
    <property type="term" value="C:npBAF complex"/>
    <property type="evidence" value="ECO:0000314"/>
    <property type="project" value="UniProtKB"/>
</dbReference>
<dbReference type="GO" id="GO:0016363">
    <property type="term" value="C:nuclear matrix"/>
    <property type="evidence" value="ECO:0000303"/>
    <property type="project" value="ComplexPortal"/>
</dbReference>
<dbReference type="GO" id="GO:0005654">
    <property type="term" value="C:nucleoplasm"/>
    <property type="evidence" value="ECO:0000304"/>
    <property type="project" value="Reactome"/>
</dbReference>
<dbReference type="GO" id="GO:0005634">
    <property type="term" value="C:nucleus"/>
    <property type="evidence" value="ECO:0000314"/>
    <property type="project" value="UniProtKB"/>
</dbReference>
<dbReference type="GO" id="GO:0005726">
    <property type="term" value="C:perichromatin fibrils"/>
    <property type="evidence" value="ECO:0000314"/>
    <property type="project" value="MGI"/>
</dbReference>
<dbReference type="GO" id="GO:0016586">
    <property type="term" value="C:RSC-type complex"/>
    <property type="evidence" value="ECO:0000303"/>
    <property type="project" value="ComplexPortal"/>
</dbReference>
<dbReference type="GO" id="GO:0016514">
    <property type="term" value="C:SWI/SNF complex"/>
    <property type="evidence" value="ECO:0000314"/>
    <property type="project" value="UniProtKB"/>
</dbReference>
<dbReference type="GO" id="GO:0005524">
    <property type="term" value="F:ATP binding"/>
    <property type="evidence" value="ECO:0007669"/>
    <property type="project" value="UniProtKB-KW"/>
</dbReference>
<dbReference type="GO" id="GO:0016887">
    <property type="term" value="F:ATP hydrolysis activity"/>
    <property type="evidence" value="ECO:0000315"/>
    <property type="project" value="MGI"/>
</dbReference>
<dbReference type="GO" id="GO:0140658">
    <property type="term" value="F:ATP-dependent chromatin remodeler activity"/>
    <property type="evidence" value="ECO:0000314"/>
    <property type="project" value="UniProt"/>
</dbReference>
<dbReference type="GO" id="GO:0003682">
    <property type="term" value="F:chromatin binding"/>
    <property type="evidence" value="ECO:0000314"/>
    <property type="project" value="UniProtKB"/>
</dbReference>
<dbReference type="GO" id="GO:0070182">
    <property type="term" value="F:DNA polymerase binding"/>
    <property type="evidence" value="ECO:0000353"/>
    <property type="project" value="BHF-UCL"/>
</dbReference>
<dbReference type="GO" id="GO:0004386">
    <property type="term" value="F:helicase activity"/>
    <property type="evidence" value="ECO:0007669"/>
    <property type="project" value="UniProtKB-KW"/>
</dbReference>
<dbReference type="GO" id="GO:0042393">
    <property type="term" value="F:histone binding"/>
    <property type="evidence" value="ECO:0007669"/>
    <property type="project" value="InterPro"/>
</dbReference>
<dbReference type="GO" id="GO:0106222">
    <property type="term" value="F:lncRNA binding"/>
    <property type="evidence" value="ECO:0000353"/>
    <property type="project" value="MGI"/>
</dbReference>
<dbReference type="GO" id="GO:0000978">
    <property type="term" value="F:RNA polymerase II cis-regulatory region sequence-specific DNA binding"/>
    <property type="evidence" value="ECO:0000314"/>
    <property type="project" value="MGI"/>
</dbReference>
<dbReference type="GO" id="GO:0000977">
    <property type="term" value="F:RNA polymerase II transcription regulatory region sequence-specific DNA binding"/>
    <property type="evidence" value="ECO:0000314"/>
    <property type="project" value="MGI"/>
</dbReference>
<dbReference type="GO" id="GO:0003714">
    <property type="term" value="F:transcription corepressor activity"/>
    <property type="evidence" value="ECO:0000250"/>
    <property type="project" value="UniProtKB"/>
</dbReference>
<dbReference type="GO" id="GO:0035904">
    <property type="term" value="P:aorta development"/>
    <property type="evidence" value="ECO:0000315"/>
    <property type="project" value="MGI"/>
</dbReference>
<dbReference type="GO" id="GO:0035887">
    <property type="term" value="P:aortic smooth muscle cell differentiation"/>
    <property type="evidence" value="ECO:0000315"/>
    <property type="project" value="MGI"/>
</dbReference>
<dbReference type="GO" id="GO:0001832">
    <property type="term" value="P:blastocyst growth"/>
    <property type="evidence" value="ECO:0000315"/>
    <property type="project" value="MGI"/>
</dbReference>
<dbReference type="GO" id="GO:0001835">
    <property type="term" value="P:blastocyst hatching"/>
    <property type="evidence" value="ECO:0000315"/>
    <property type="project" value="MGI"/>
</dbReference>
<dbReference type="GO" id="GO:0001568">
    <property type="term" value="P:blood vessel development"/>
    <property type="evidence" value="ECO:0000315"/>
    <property type="project" value="MGI"/>
</dbReference>
<dbReference type="GO" id="GO:0000902">
    <property type="term" value="P:cell morphogenesis"/>
    <property type="evidence" value="ECO:0000315"/>
    <property type="project" value="MGI"/>
</dbReference>
<dbReference type="GO" id="GO:0006338">
    <property type="term" value="P:chromatin remodeling"/>
    <property type="evidence" value="ECO:0000315"/>
    <property type="project" value="MGI"/>
</dbReference>
<dbReference type="GO" id="GO:0060976">
    <property type="term" value="P:coronary vasculature development"/>
    <property type="evidence" value="ECO:0000315"/>
    <property type="project" value="MGI"/>
</dbReference>
<dbReference type="GO" id="GO:0060318">
    <property type="term" value="P:definitive erythrocyte differentiation"/>
    <property type="evidence" value="ECO:0000315"/>
    <property type="project" value="MGI"/>
</dbReference>
<dbReference type="GO" id="GO:0035116">
    <property type="term" value="P:embryonic hindlimb morphogenesis"/>
    <property type="evidence" value="ECO:0000315"/>
    <property type="project" value="MGI"/>
</dbReference>
<dbReference type="GO" id="GO:0048562">
    <property type="term" value="P:embryonic organ morphogenesis"/>
    <property type="evidence" value="ECO:0000315"/>
    <property type="project" value="MGI"/>
</dbReference>
<dbReference type="GO" id="GO:0048730">
    <property type="term" value="P:epidermis morphogenesis"/>
    <property type="evidence" value="ECO:0000315"/>
    <property type="project" value="MGI"/>
</dbReference>
<dbReference type="GO" id="GO:0030198">
    <property type="term" value="P:extracellular matrix organization"/>
    <property type="evidence" value="ECO:0000315"/>
    <property type="project" value="MGI"/>
</dbReference>
<dbReference type="GO" id="GO:0030900">
    <property type="term" value="P:forebrain development"/>
    <property type="evidence" value="ECO:0000315"/>
    <property type="project" value="MGI"/>
</dbReference>
<dbReference type="GO" id="GO:0010467">
    <property type="term" value="P:gene expression"/>
    <property type="evidence" value="ECO:0000314"/>
    <property type="project" value="MGI"/>
</dbReference>
<dbReference type="GO" id="GO:0007403">
    <property type="term" value="P:glial cell fate determination"/>
    <property type="evidence" value="ECO:0000315"/>
    <property type="project" value="MGI"/>
</dbReference>
<dbReference type="GO" id="GO:0007507">
    <property type="term" value="P:heart development"/>
    <property type="evidence" value="ECO:0000315"/>
    <property type="project" value="MGI"/>
</dbReference>
<dbReference type="GO" id="GO:0060347">
    <property type="term" value="P:heart trabecula formation"/>
    <property type="evidence" value="ECO:0000316"/>
    <property type="project" value="MGI"/>
</dbReference>
<dbReference type="GO" id="GO:0030902">
    <property type="term" value="P:hindbrain development"/>
    <property type="evidence" value="ECO:0000315"/>
    <property type="project" value="MGI"/>
</dbReference>
<dbReference type="GO" id="GO:0001701">
    <property type="term" value="P:in utero embryonic development"/>
    <property type="evidence" value="ECO:0000315"/>
    <property type="project" value="MGI"/>
</dbReference>
<dbReference type="GO" id="GO:0030216">
    <property type="term" value="P:keratinocyte differentiation"/>
    <property type="evidence" value="ECO:0000315"/>
    <property type="project" value="MGI"/>
</dbReference>
<dbReference type="GO" id="GO:0070307">
    <property type="term" value="P:lens fiber cell development"/>
    <property type="evidence" value="ECO:0000315"/>
    <property type="project" value="MGI"/>
</dbReference>
<dbReference type="GO" id="GO:0001889">
    <property type="term" value="P:liver development"/>
    <property type="evidence" value="ECO:0000315"/>
    <property type="project" value="MGI"/>
</dbReference>
<dbReference type="GO" id="GO:0043066">
    <property type="term" value="P:negative regulation of apoptotic process"/>
    <property type="evidence" value="ECO:0000315"/>
    <property type="project" value="MGI"/>
</dbReference>
<dbReference type="GO" id="GO:0045596">
    <property type="term" value="P:negative regulation of cell differentiation"/>
    <property type="evidence" value="ECO:0000303"/>
    <property type="project" value="ComplexPortal"/>
</dbReference>
<dbReference type="GO" id="GO:0000122">
    <property type="term" value="P:negative regulation of transcription by RNA polymerase II"/>
    <property type="evidence" value="ECO:0000315"/>
    <property type="project" value="MGI"/>
</dbReference>
<dbReference type="GO" id="GO:0007399">
    <property type="term" value="P:nervous system development"/>
    <property type="evidence" value="ECO:0000315"/>
    <property type="project" value="UniProtKB"/>
</dbReference>
<dbReference type="GO" id="GO:0022008">
    <property type="term" value="P:neurogenesis"/>
    <property type="evidence" value="ECO:0000314"/>
    <property type="project" value="MGI"/>
</dbReference>
<dbReference type="GO" id="GO:0006334">
    <property type="term" value="P:nucleosome assembly"/>
    <property type="evidence" value="ECO:0000304"/>
    <property type="project" value="MGI"/>
</dbReference>
<dbReference type="GO" id="GO:0003151">
    <property type="term" value="P:outflow tract morphogenesis"/>
    <property type="evidence" value="ECO:0000315"/>
    <property type="project" value="MGI"/>
</dbReference>
<dbReference type="GO" id="GO:0061626">
    <property type="term" value="P:pharyngeal arch artery morphogenesis"/>
    <property type="evidence" value="ECO:0000315"/>
    <property type="project" value="MGI"/>
</dbReference>
<dbReference type="GO" id="GO:0045597">
    <property type="term" value="P:positive regulation of cell differentiation"/>
    <property type="evidence" value="ECO:0000315"/>
    <property type="project" value="MGI"/>
</dbReference>
<dbReference type="GO" id="GO:0008284">
    <property type="term" value="P:positive regulation of cell population proliferation"/>
    <property type="evidence" value="ECO:0000315"/>
    <property type="project" value="MGI"/>
</dbReference>
<dbReference type="GO" id="GO:0120162">
    <property type="term" value="P:positive regulation of cold-induced thermogenesis"/>
    <property type="evidence" value="ECO:0000314"/>
    <property type="project" value="UniProt"/>
</dbReference>
<dbReference type="GO" id="GO:2000781">
    <property type="term" value="P:positive regulation of double-strand break repair"/>
    <property type="evidence" value="ECO:0000303"/>
    <property type="project" value="ComplexPortal"/>
</dbReference>
<dbReference type="GO" id="GO:0045663">
    <property type="term" value="P:positive regulation of myoblast differentiation"/>
    <property type="evidence" value="ECO:0000303"/>
    <property type="project" value="ComplexPortal"/>
</dbReference>
<dbReference type="GO" id="GO:1902459">
    <property type="term" value="P:positive regulation of stem cell population maintenance"/>
    <property type="evidence" value="ECO:0000303"/>
    <property type="project" value="ComplexPortal"/>
</dbReference>
<dbReference type="GO" id="GO:0045582">
    <property type="term" value="P:positive regulation of T cell differentiation"/>
    <property type="evidence" value="ECO:0000303"/>
    <property type="project" value="ComplexPortal"/>
</dbReference>
<dbReference type="GO" id="GO:0045944">
    <property type="term" value="P:positive regulation of transcription by RNA polymerase II"/>
    <property type="evidence" value="ECO:0000314"/>
    <property type="project" value="UniProtKB"/>
</dbReference>
<dbReference type="GO" id="GO:0030177">
    <property type="term" value="P:positive regulation of Wnt signaling pathway"/>
    <property type="evidence" value="ECO:0000315"/>
    <property type="project" value="BHF-UCL"/>
</dbReference>
<dbReference type="GO" id="GO:0060319">
    <property type="term" value="P:primitive erythrocyte differentiation"/>
    <property type="evidence" value="ECO:0000315"/>
    <property type="project" value="MGI"/>
</dbReference>
<dbReference type="GO" id="GO:0030334">
    <property type="term" value="P:regulation of cell migration"/>
    <property type="evidence" value="ECO:0000315"/>
    <property type="project" value="MGI"/>
</dbReference>
<dbReference type="GO" id="GO:0070316">
    <property type="term" value="P:regulation of G0 to G1 transition"/>
    <property type="evidence" value="ECO:0000303"/>
    <property type="project" value="ComplexPortal"/>
</dbReference>
<dbReference type="GO" id="GO:2000045">
    <property type="term" value="P:regulation of G1/S transition of mitotic cell cycle"/>
    <property type="evidence" value="ECO:0000303"/>
    <property type="project" value="ComplexPortal"/>
</dbReference>
<dbReference type="GO" id="GO:0030071">
    <property type="term" value="P:regulation of mitotic metaphase/anaphase transition"/>
    <property type="evidence" value="ECO:0000303"/>
    <property type="project" value="ComplexPortal"/>
</dbReference>
<dbReference type="GO" id="GO:2000819">
    <property type="term" value="P:regulation of nucleotide-excision repair"/>
    <property type="evidence" value="ECO:0000303"/>
    <property type="project" value="ComplexPortal"/>
</dbReference>
<dbReference type="GO" id="GO:0006357">
    <property type="term" value="P:regulation of transcription by RNA polymerase II"/>
    <property type="evidence" value="ECO:0000303"/>
    <property type="project" value="ComplexPortal"/>
</dbReference>
<dbReference type="GO" id="GO:0019827">
    <property type="term" value="P:stem cell population maintenance"/>
    <property type="evidence" value="ECO:0000315"/>
    <property type="project" value="MGI"/>
</dbReference>
<dbReference type="GO" id="GO:0006366">
    <property type="term" value="P:transcription by RNA polymerase II"/>
    <property type="evidence" value="ECO:0000316"/>
    <property type="project" value="MGI"/>
</dbReference>
<dbReference type="GO" id="GO:0045815">
    <property type="term" value="P:transcription initiation-coupled chromatin remodeling"/>
    <property type="evidence" value="ECO:0000314"/>
    <property type="project" value="UniProt"/>
</dbReference>
<dbReference type="GO" id="GO:0001570">
    <property type="term" value="P:vasculogenesis"/>
    <property type="evidence" value="ECO:0000315"/>
    <property type="project" value="MGI"/>
</dbReference>
<dbReference type="GO" id="GO:0003281">
    <property type="term" value="P:ventricular septum development"/>
    <property type="evidence" value="ECO:0000315"/>
    <property type="project" value="MGI"/>
</dbReference>
<dbReference type="CDD" id="cd05516">
    <property type="entry name" value="Bromo_SNF2L2"/>
    <property type="match status" value="1"/>
</dbReference>
<dbReference type="CDD" id="cd18062">
    <property type="entry name" value="DEXHc_SMARCA4"/>
    <property type="match status" value="1"/>
</dbReference>
<dbReference type="CDD" id="cd18793">
    <property type="entry name" value="SF2_C_SNF"/>
    <property type="match status" value="1"/>
</dbReference>
<dbReference type="FunFam" id="3.40.50.10810:FF:000008">
    <property type="entry name" value="Chromatin structure-remodeling complex subunit snf21"/>
    <property type="match status" value="1"/>
</dbReference>
<dbReference type="FunFam" id="1.20.920.10:FF:000004">
    <property type="entry name" value="probable global transcription activator SNF2L2 isoform X1"/>
    <property type="match status" value="1"/>
</dbReference>
<dbReference type="FunFam" id="3.40.5.120:FF:000001">
    <property type="entry name" value="probable global transcription activator SNF2L2 isoform X1"/>
    <property type="match status" value="1"/>
</dbReference>
<dbReference type="FunFam" id="1.20.5.170:FF:000089">
    <property type="entry name" value="Putative global transcription activator SNF2L2"/>
    <property type="match status" value="1"/>
</dbReference>
<dbReference type="FunFam" id="3.40.50.300:FF:003020">
    <property type="entry name" value="SNF2-related domain-containing protein"/>
    <property type="match status" value="1"/>
</dbReference>
<dbReference type="Gene3D" id="1.20.5.170">
    <property type="match status" value="1"/>
</dbReference>
<dbReference type="Gene3D" id="3.40.5.120">
    <property type="match status" value="1"/>
</dbReference>
<dbReference type="Gene3D" id="1.20.920.10">
    <property type="entry name" value="Bromodomain-like"/>
    <property type="match status" value="1"/>
</dbReference>
<dbReference type="Gene3D" id="3.40.50.300">
    <property type="entry name" value="P-loop containing nucleotide triphosphate hydrolases"/>
    <property type="match status" value="1"/>
</dbReference>
<dbReference type="Gene3D" id="3.40.50.10810">
    <property type="entry name" value="Tandem AAA-ATPase domain"/>
    <property type="match status" value="1"/>
</dbReference>
<dbReference type="InterPro" id="IPR030100">
    <property type="entry name" value="BRG1_ATP-bd"/>
</dbReference>
<dbReference type="InterPro" id="IPR006576">
    <property type="entry name" value="BRK_domain"/>
</dbReference>
<dbReference type="InterPro" id="IPR037259">
    <property type="entry name" value="BRK_sf"/>
</dbReference>
<dbReference type="InterPro" id="IPR001487">
    <property type="entry name" value="Bromodomain"/>
</dbReference>
<dbReference type="InterPro" id="IPR036427">
    <property type="entry name" value="Bromodomain-like_sf"/>
</dbReference>
<dbReference type="InterPro" id="IPR018359">
    <property type="entry name" value="Bromodomain_CS"/>
</dbReference>
<dbReference type="InterPro" id="IPR014978">
    <property type="entry name" value="Gln-Leu-Gln_QLQ"/>
</dbReference>
<dbReference type="InterPro" id="IPR014001">
    <property type="entry name" value="Helicase_ATP-bd"/>
</dbReference>
<dbReference type="InterPro" id="IPR001650">
    <property type="entry name" value="Helicase_C-like"/>
</dbReference>
<dbReference type="InterPro" id="IPR014012">
    <property type="entry name" value="HSA_dom"/>
</dbReference>
<dbReference type="InterPro" id="IPR027417">
    <property type="entry name" value="P-loop_NTPase"/>
</dbReference>
<dbReference type="InterPro" id="IPR029295">
    <property type="entry name" value="SnAC"/>
</dbReference>
<dbReference type="InterPro" id="IPR038718">
    <property type="entry name" value="SNF2-like_sf"/>
</dbReference>
<dbReference type="InterPro" id="IPR049730">
    <property type="entry name" value="SNF2/RAD54-like_C"/>
</dbReference>
<dbReference type="InterPro" id="IPR000330">
    <property type="entry name" value="SNF2_N"/>
</dbReference>
<dbReference type="PANTHER" id="PTHR10799">
    <property type="entry name" value="SNF2/RAD54 HELICASE FAMILY"/>
    <property type="match status" value="1"/>
</dbReference>
<dbReference type="Pfam" id="PF07533">
    <property type="entry name" value="BRK"/>
    <property type="match status" value="1"/>
</dbReference>
<dbReference type="Pfam" id="PF00439">
    <property type="entry name" value="Bromodomain"/>
    <property type="match status" value="1"/>
</dbReference>
<dbReference type="Pfam" id="PF00271">
    <property type="entry name" value="Helicase_C"/>
    <property type="match status" value="1"/>
</dbReference>
<dbReference type="Pfam" id="PF07529">
    <property type="entry name" value="HSA"/>
    <property type="match status" value="1"/>
</dbReference>
<dbReference type="Pfam" id="PF08880">
    <property type="entry name" value="QLQ"/>
    <property type="match status" value="1"/>
</dbReference>
<dbReference type="Pfam" id="PF14619">
    <property type="entry name" value="SnAC"/>
    <property type="match status" value="1"/>
</dbReference>
<dbReference type="Pfam" id="PF00176">
    <property type="entry name" value="SNF2-rel_dom"/>
    <property type="match status" value="1"/>
</dbReference>
<dbReference type="PRINTS" id="PR00503">
    <property type="entry name" value="BROMODOMAIN"/>
</dbReference>
<dbReference type="SMART" id="SM00592">
    <property type="entry name" value="BRK"/>
    <property type="match status" value="1"/>
</dbReference>
<dbReference type="SMART" id="SM00297">
    <property type="entry name" value="BROMO"/>
    <property type="match status" value="1"/>
</dbReference>
<dbReference type="SMART" id="SM00487">
    <property type="entry name" value="DEXDc"/>
    <property type="match status" value="1"/>
</dbReference>
<dbReference type="SMART" id="SM00490">
    <property type="entry name" value="HELICc"/>
    <property type="match status" value="1"/>
</dbReference>
<dbReference type="SMART" id="SM00573">
    <property type="entry name" value="HSA"/>
    <property type="match status" value="1"/>
</dbReference>
<dbReference type="SMART" id="SM00951">
    <property type="entry name" value="QLQ"/>
    <property type="match status" value="1"/>
</dbReference>
<dbReference type="SMART" id="SM01314">
    <property type="entry name" value="SnAC"/>
    <property type="match status" value="1"/>
</dbReference>
<dbReference type="SUPFAM" id="SSF160481">
    <property type="entry name" value="BRK domain-like"/>
    <property type="match status" value="1"/>
</dbReference>
<dbReference type="SUPFAM" id="SSF47370">
    <property type="entry name" value="Bromodomain"/>
    <property type="match status" value="1"/>
</dbReference>
<dbReference type="SUPFAM" id="SSF52540">
    <property type="entry name" value="P-loop containing nucleoside triphosphate hydrolases"/>
    <property type="match status" value="2"/>
</dbReference>
<dbReference type="PROSITE" id="PS00633">
    <property type="entry name" value="BROMODOMAIN_1"/>
    <property type="match status" value="1"/>
</dbReference>
<dbReference type="PROSITE" id="PS50014">
    <property type="entry name" value="BROMODOMAIN_2"/>
    <property type="match status" value="1"/>
</dbReference>
<dbReference type="PROSITE" id="PS51192">
    <property type="entry name" value="HELICASE_ATP_BIND_1"/>
    <property type="match status" value="1"/>
</dbReference>
<dbReference type="PROSITE" id="PS51194">
    <property type="entry name" value="HELICASE_CTER"/>
    <property type="match status" value="1"/>
</dbReference>
<dbReference type="PROSITE" id="PS51204">
    <property type="entry name" value="HSA"/>
    <property type="match status" value="1"/>
</dbReference>
<dbReference type="PROSITE" id="PS51666">
    <property type="entry name" value="QLQ"/>
    <property type="match status" value="1"/>
</dbReference>
<keyword id="KW-0007">Acetylation</keyword>
<keyword id="KW-0010">Activator</keyword>
<keyword id="KW-0025">Alternative splicing</keyword>
<keyword id="KW-0103">Bromodomain</keyword>
<keyword id="KW-0156">Chromatin regulator</keyword>
<keyword id="KW-0378">Hydrolase</keyword>
<keyword id="KW-1017">Isopeptide bond</keyword>
<keyword id="KW-0524">Neurogenesis</keyword>
<keyword id="KW-0539">Nucleus</keyword>
<keyword id="KW-0597">Phosphoprotein</keyword>
<keyword id="KW-1185">Reference proteome</keyword>
<keyword id="KW-0678">Repressor</keyword>
<keyword id="KW-0694">RNA-binding</keyword>
<keyword id="KW-0804">Transcription</keyword>
<keyword id="KW-0805">Transcription regulation</keyword>
<keyword id="KW-0832">Ubl conjugation</keyword>